<dbReference type="EC" id="2.7.7.7" evidence="1"/>
<dbReference type="EMBL" id="AL766854">
    <property type="protein sequence ID" value="CAD47557.1"/>
    <property type="molecule type" value="Genomic_DNA"/>
</dbReference>
<dbReference type="RefSeq" id="WP_001292137.1">
    <property type="nucleotide sequence ID" value="NC_004368.1"/>
</dbReference>
<dbReference type="SMR" id="P63983"/>
<dbReference type="KEGG" id="san:polC"/>
<dbReference type="eggNOG" id="COG2176">
    <property type="taxonomic scope" value="Bacteria"/>
</dbReference>
<dbReference type="HOGENOM" id="CLU_003297_2_0_9"/>
<dbReference type="Proteomes" id="UP000000823">
    <property type="component" value="Chromosome"/>
</dbReference>
<dbReference type="GO" id="GO:0005737">
    <property type="term" value="C:cytoplasm"/>
    <property type="evidence" value="ECO:0007669"/>
    <property type="project" value="UniProtKB-SubCell"/>
</dbReference>
<dbReference type="GO" id="GO:0008408">
    <property type="term" value="F:3'-5' exonuclease activity"/>
    <property type="evidence" value="ECO:0007669"/>
    <property type="project" value="UniProtKB-UniRule"/>
</dbReference>
<dbReference type="GO" id="GO:0003677">
    <property type="term" value="F:DNA binding"/>
    <property type="evidence" value="ECO:0007669"/>
    <property type="project" value="UniProtKB-UniRule"/>
</dbReference>
<dbReference type="GO" id="GO:0003887">
    <property type="term" value="F:DNA-directed DNA polymerase activity"/>
    <property type="evidence" value="ECO:0007669"/>
    <property type="project" value="UniProtKB-UniRule"/>
</dbReference>
<dbReference type="GO" id="GO:0006261">
    <property type="term" value="P:DNA-templated DNA replication"/>
    <property type="evidence" value="ECO:0007669"/>
    <property type="project" value="UniProtKB-UniRule"/>
</dbReference>
<dbReference type="CDD" id="cd07435">
    <property type="entry name" value="PHP_PolIIIA_POLC"/>
    <property type="match status" value="1"/>
</dbReference>
<dbReference type="CDD" id="cd04484">
    <property type="entry name" value="polC_OBF"/>
    <property type="match status" value="1"/>
</dbReference>
<dbReference type="FunFam" id="3.30.420.10:FF:000045">
    <property type="entry name" value="3'-5' exonuclease DinG"/>
    <property type="match status" value="1"/>
</dbReference>
<dbReference type="Gene3D" id="1.10.150.870">
    <property type="match status" value="1"/>
</dbReference>
<dbReference type="Gene3D" id="3.30.1900.20">
    <property type="match status" value="1"/>
</dbReference>
<dbReference type="Gene3D" id="6.10.140.1510">
    <property type="match status" value="1"/>
</dbReference>
<dbReference type="Gene3D" id="3.20.20.140">
    <property type="entry name" value="Metal-dependent hydrolases"/>
    <property type="match status" value="1"/>
</dbReference>
<dbReference type="Gene3D" id="2.40.50.140">
    <property type="entry name" value="Nucleic acid-binding proteins"/>
    <property type="match status" value="1"/>
</dbReference>
<dbReference type="Gene3D" id="1.10.150.700">
    <property type="entry name" value="PolC, middle finger domain"/>
    <property type="match status" value="1"/>
</dbReference>
<dbReference type="Gene3D" id="3.30.420.10">
    <property type="entry name" value="Ribonuclease H-like superfamily/Ribonuclease H"/>
    <property type="match status" value="1"/>
</dbReference>
<dbReference type="HAMAP" id="MF_00356">
    <property type="entry name" value="DNApol_PolC"/>
    <property type="match status" value="1"/>
</dbReference>
<dbReference type="InterPro" id="IPR011708">
    <property type="entry name" value="DNA_pol3_alpha_NTPase_dom"/>
</dbReference>
<dbReference type="InterPro" id="IPR040982">
    <property type="entry name" value="DNA_pol3_finger"/>
</dbReference>
<dbReference type="InterPro" id="IPR024754">
    <property type="entry name" value="DNA_PolC-like_N_II"/>
</dbReference>
<dbReference type="InterPro" id="IPR028112">
    <property type="entry name" value="DNA_PolC-type_N_I"/>
</dbReference>
<dbReference type="InterPro" id="IPR004805">
    <property type="entry name" value="DnaE2/DnaE/PolC"/>
</dbReference>
<dbReference type="InterPro" id="IPR029460">
    <property type="entry name" value="DNAPol_HHH"/>
</dbReference>
<dbReference type="InterPro" id="IPR006054">
    <property type="entry name" value="DnaQ"/>
</dbReference>
<dbReference type="InterPro" id="IPR013520">
    <property type="entry name" value="Exonuclease_RNaseT/DNA_pol3"/>
</dbReference>
<dbReference type="InterPro" id="IPR012340">
    <property type="entry name" value="NA-bd_OB-fold"/>
</dbReference>
<dbReference type="InterPro" id="IPR004365">
    <property type="entry name" value="NA-bd_OB_tRNA"/>
</dbReference>
<dbReference type="InterPro" id="IPR004013">
    <property type="entry name" value="PHP_dom"/>
</dbReference>
<dbReference type="InterPro" id="IPR003141">
    <property type="entry name" value="Pol/His_phosphatase_N"/>
</dbReference>
<dbReference type="InterPro" id="IPR006308">
    <property type="entry name" value="Pol_III_a_PolC-type_gram_pos"/>
</dbReference>
<dbReference type="InterPro" id="IPR044923">
    <property type="entry name" value="PolC_middle_finger_sf"/>
</dbReference>
<dbReference type="InterPro" id="IPR012337">
    <property type="entry name" value="RNaseH-like_sf"/>
</dbReference>
<dbReference type="InterPro" id="IPR036397">
    <property type="entry name" value="RNaseH_sf"/>
</dbReference>
<dbReference type="NCBIfam" id="TIGR00573">
    <property type="entry name" value="dnaq"/>
    <property type="match status" value="1"/>
</dbReference>
<dbReference type="NCBIfam" id="TIGR01405">
    <property type="entry name" value="polC_Gram_pos"/>
    <property type="match status" value="1"/>
</dbReference>
<dbReference type="NCBIfam" id="NF001688">
    <property type="entry name" value="PRK00448.1"/>
    <property type="match status" value="1"/>
</dbReference>
<dbReference type="PANTHER" id="PTHR32294:SF5">
    <property type="entry name" value="DNA POLYMERASE III POLC-TYPE"/>
    <property type="match status" value="1"/>
</dbReference>
<dbReference type="PANTHER" id="PTHR32294">
    <property type="entry name" value="DNA POLYMERASE III SUBUNIT ALPHA"/>
    <property type="match status" value="1"/>
</dbReference>
<dbReference type="Pfam" id="PF14480">
    <property type="entry name" value="DNA_pol3_a_NI"/>
    <property type="match status" value="1"/>
</dbReference>
<dbReference type="Pfam" id="PF11490">
    <property type="entry name" value="DNA_pol3_a_NII"/>
    <property type="match status" value="1"/>
</dbReference>
<dbReference type="Pfam" id="PF07733">
    <property type="entry name" value="DNA_pol3_alpha"/>
    <property type="match status" value="1"/>
</dbReference>
<dbReference type="Pfam" id="PF17657">
    <property type="entry name" value="DNA_pol3_finger"/>
    <property type="match status" value="1"/>
</dbReference>
<dbReference type="Pfam" id="PF14579">
    <property type="entry name" value="HHH_6"/>
    <property type="match status" value="1"/>
</dbReference>
<dbReference type="Pfam" id="PF02811">
    <property type="entry name" value="PHP"/>
    <property type="match status" value="2"/>
</dbReference>
<dbReference type="Pfam" id="PF00929">
    <property type="entry name" value="RNase_T"/>
    <property type="match status" value="1"/>
</dbReference>
<dbReference type="Pfam" id="PF01336">
    <property type="entry name" value="tRNA_anti-codon"/>
    <property type="match status" value="1"/>
</dbReference>
<dbReference type="SMART" id="SM00479">
    <property type="entry name" value="EXOIII"/>
    <property type="match status" value="1"/>
</dbReference>
<dbReference type="SMART" id="SM00481">
    <property type="entry name" value="POLIIIAc"/>
    <property type="match status" value="1"/>
</dbReference>
<dbReference type="SUPFAM" id="SSF50249">
    <property type="entry name" value="Nucleic acid-binding proteins"/>
    <property type="match status" value="1"/>
</dbReference>
<dbReference type="SUPFAM" id="SSF53098">
    <property type="entry name" value="Ribonuclease H-like"/>
    <property type="match status" value="1"/>
</dbReference>
<keyword id="KW-0963">Cytoplasm</keyword>
<keyword id="KW-0235">DNA replication</keyword>
<keyword id="KW-0239">DNA-directed DNA polymerase</keyword>
<keyword id="KW-0269">Exonuclease</keyword>
<keyword id="KW-0378">Hydrolase</keyword>
<keyword id="KW-0540">Nuclease</keyword>
<keyword id="KW-0548">Nucleotidyltransferase</keyword>
<keyword id="KW-0808">Transferase</keyword>
<organism>
    <name type="scientific">Streptococcus agalactiae serotype III (strain NEM316)</name>
    <dbReference type="NCBI Taxonomy" id="211110"/>
    <lineage>
        <taxon>Bacteria</taxon>
        <taxon>Bacillati</taxon>
        <taxon>Bacillota</taxon>
        <taxon>Bacilli</taxon>
        <taxon>Lactobacillales</taxon>
        <taxon>Streptococcaceae</taxon>
        <taxon>Streptococcus</taxon>
    </lineage>
</organism>
<comment type="function">
    <text evidence="1">Required for replicative DNA synthesis. This DNA polymerase also exhibits 3' to 5' exonuclease activity.</text>
</comment>
<comment type="catalytic activity">
    <reaction evidence="1">
        <text>DNA(n) + a 2'-deoxyribonucleoside 5'-triphosphate = DNA(n+1) + diphosphate</text>
        <dbReference type="Rhea" id="RHEA:22508"/>
        <dbReference type="Rhea" id="RHEA-COMP:17339"/>
        <dbReference type="Rhea" id="RHEA-COMP:17340"/>
        <dbReference type="ChEBI" id="CHEBI:33019"/>
        <dbReference type="ChEBI" id="CHEBI:61560"/>
        <dbReference type="ChEBI" id="CHEBI:173112"/>
        <dbReference type="EC" id="2.7.7.7"/>
    </reaction>
</comment>
<comment type="subcellular location">
    <subcellularLocation>
        <location evidence="1">Cytoplasm</location>
    </subcellularLocation>
</comment>
<comment type="similarity">
    <text evidence="1">Belongs to the DNA polymerase type-C family. PolC subfamily.</text>
</comment>
<reference key="1">
    <citation type="journal article" date="2002" name="Mol. Microbiol.">
        <title>Genome sequence of Streptococcus agalactiae, a pathogen causing invasive neonatal disease.</title>
        <authorList>
            <person name="Glaser P."/>
            <person name="Rusniok C."/>
            <person name="Buchrieser C."/>
            <person name="Chevalier F."/>
            <person name="Frangeul L."/>
            <person name="Msadek T."/>
            <person name="Zouine M."/>
            <person name="Couve E."/>
            <person name="Lalioui L."/>
            <person name="Poyart C."/>
            <person name="Trieu-Cuot P."/>
            <person name="Kunst F."/>
        </authorList>
    </citation>
    <scope>NUCLEOTIDE SEQUENCE [LARGE SCALE GENOMIC DNA]</scope>
    <source>
        <strain>NEM316</strain>
    </source>
</reference>
<sequence>MSELFKKLMDQIEMPLEIKNSSVFSSADIIEVKVHSLSRLWEFHFSFPELLPIEVYRELQTRLVNSFEKADIKATFDIRAETIDFSDDLLQDYYQQAFCEPLCNSASFKSSFSQLKVHYNGSQMIISAPQFVNNNHFRQNHLPRLEQQFSLFGFGKLAIDMVSDEQMTQDLKSSFETNREQLLEKANQEAMQALEAQKSLEDSAPPSEEVTPTQNYDFKERIKQRQAGFEKAEITPMIEVTTEENRIVFEGMVFSVERKTTRTGRHIINFKMTDYTSSFAMQKWAKDDEELKKYDMISKGSWLRVRGNIENNNFTKSLTMNVQDIKEIVHHERKDLMPADQKRVEFHAHTNMSTMDALPTVESLIDTAAKWGHPAIAITDHANVQSFPHGYHRAKKAGIKAIFGLEANIVEDKVPISYNEVDMNLHEATYVVFDVETTGLSAANNDLIQIAASKMFKGNIIEQFDEFIDPGHPLSAFTTELTGITDNHVRGSKPILQVLQEFQNFCQGTVLVAHNATFDVGFMNANYERHNLPLITQPVIDTLEFARNLYPEYKRHGLGPLTKRFQVALEHHHMANYDAEATGRLLFIFLKEARENRDVTNLMELNTKLVAEDSYKKARIKHATIYVQNQVGLKNIFKLVSLSNVKYFEGVARIPRSVLDAHREGLLLGTACSDGEVFDALLSNGIDAAVTLAKYYDFIEVMPPAIYRPLVVRDLIKDEVGIQQIIRDLIEVGRRLDKPVLATGNVHYIEPEDEIYREIIVRSLGQGAMINRTIGRGEDAQPAPLPKAHFRTTNEMLDEFAFLGKDLAYEIVVTNTNTFADRFEDVEVVKGDLYTPFVDRAEERVAELTYAKAFEIYGNPLPDIIDLRIEKELASILGNGFAVIYLASQMLVQRSNERGYLVGSRGSVGSSFVATMIGITEVNPMPPHYVCPNCQHSEFITDGSCGSGYDLPNKNCPKCGTLYKKDGQDIPFETFLGFDGDKVPDIDLNFSGDDQPSAHLDVRDIFGEEYAFRAGTVGTVAEKTAFGFVKGYERDYNKFYNDAEVERLATGAAGVKRSTGQHPGGIVVIPNYMDVYDFTPVQYPADDMTAAWQTTHFNFHDIDENVLKLDILGHDDPTMIRKLQDLSGIDPSNILPDDPDVMKLFSGTEVLGVTEEQIGTPTGMLGIPEFGTNFVRGMVNETHPTTFAELLQLSGLSHGTDVWLGNAQDLIKEGIATLSTVIGCRDDIMVYLMHAGLQPKMAFTIMERVRKGLWLKISEDERNGYIQAMRDNNVPDWYIESCGKIKYMFPKAHAAAYVLMALRVAYFKVHYPIFYYCAYFSIRAKAFELRTMSAGLDAVKARMKDITEKRQRNEATNVENDLFTTLELVNEMLERGFKFGKLDLYRSHATDFIIEEDTLIPPFVAMEGLGENVAKQIVRAREDGEFLSKTELRKRGGVSSTLVEKFDEMGILGNLPEDNQLSLFDDFF</sequence>
<evidence type="ECO:0000255" key="1">
    <source>
        <dbReference type="HAMAP-Rule" id="MF_00356"/>
    </source>
</evidence>
<evidence type="ECO:0000256" key="2">
    <source>
        <dbReference type="SAM" id="MobiDB-lite"/>
    </source>
</evidence>
<protein>
    <recommendedName>
        <fullName evidence="1">DNA polymerase III PolC-type</fullName>
        <shortName evidence="1">PolIII</shortName>
        <ecNumber evidence="1">2.7.7.7</ecNumber>
    </recommendedName>
</protein>
<name>DPO3_STRA3</name>
<feature type="chain" id="PRO_0000204595" description="DNA polymerase III PolC-type">
    <location>
        <begin position="1"/>
        <end position="1468"/>
    </location>
</feature>
<feature type="domain" description="Exonuclease">
    <location>
        <begin position="430"/>
        <end position="586"/>
    </location>
</feature>
<feature type="region of interest" description="Disordered" evidence="2">
    <location>
        <begin position="197"/>
        <end position="217"/>
    </location>
</feature>
<proteinExistence type="inferred from homology"/>
<gene>
    <name evidence="1" type="primary">polC</name>
    <name type="ordered locus">gbs1898</name>
</gene>
<accession>P63983</accession>
<accession>Q8CX24</accession>
<accession>Q8DXE0</accession>